<dbReference type="EC" id="1.4.4.2" evidence="1"/>
<dbReference type="EMBL" id="CP001110">
    <property type="protein sequence ID" value="ACF42517.1"/>
    <property type="molecule type" value="Genomic_DNA"/>
</dbReference>
<dbReference type="RefSeq" id="WP_012507015.1">
    <property type="nucleotide sequence ID" value="NC_011060.1"/>
</dbReference>
<dbReference type="SMR" id="B4SB96"/>
<dbReference type="STRING" id="324925.Ppha_0179"/>
<dbReference type="KEGG" id="pph:Ppha_0179"/>
<dbReference type="eggNOG" id="COG1003">
    <property type="taxonomic scope" value="Bacteria"/>
</dbReference>
<dbReference type="HOGENOM" id="CLU_004620_5_0_10"/>
<dbReference type="OrthoDB" id="9801272at2"/>
<dbReference type="Proteomes" id="UP000002724">
    <property type="component" value="Chromosome"/>
</dbReference>
<dbReference type="GO" id="GO:0005829">
    <property type="term" value="C:cytosol"/>
    <property type="evidence" value="ECO:0007669"/>
    <property type="project" value="TreeGrafter"/>
</dbReference>
<dbReference type="GO" id="GO:0005960">
    <property type="term" value="C:glycine cleavage complex"/>
    <property type="evidence" value="ECO:0007669"/>
    <property type="project" value="TreeGrafter"/>
</dbReference>
<dbReference type="GO" id="GO:0016594">
    <property type="term" value="F:glycine binding"/>
    <property type="evidence" value="ECO:0007669"/>
    <property type="project" value="TreeGrafter"/>
</dbReference>
<dbReference type="GO" id="GO:0004375">
    <property type="term" value="F:glycine dehydrogenase (decarboxylating) activity"/>
    <property type="evidence" value="ECO:0007669"/>
    <property type="project" value="UniProtKB-EC"/>
</dbReference>
<dbReference type="GO" id="GO:0030170">
    <property type="term" value="F:pyridoxal phosphate binding"/>
    <property type="evidence" value="ECO:0007669"/>
    <property type="project" value="TreeGrafter"/>
</dbReference>
<dbReference type="GO" id="GO:0019464">
    <property type="term" value="P:glycine decarboxylation via glycine cleavage system"/>
    <property type="evidence" value="ECO:0007669"/>
    <property type="project" value="UniProtKB-UniRule"/>
</dbReference>
<dbReference type="CDD" id="cd00613">
    <property type="entry name" value="GDC-P"/>
    <property type="match status" value="1"/>
</dbReference>
<dbReference type="FunFam" id="3.40.640.10:FF:000224">
    <property type="entry name" value="Probable glycine dehydrogenase (decarboxylating) subunit 2"/>
    <property type="match status" value="1"/>
</dbReference>
<dbReference type="FunFam" id="3.90.1150.10:FF:000014">
    <property type="entry name" value="Probable glycine dehydrogenase (decarboxylating) subunit 2"/>
    <property type="match status" value="1"/>
</dbReference>
<dbReference type="Gene3D" id="6.20.440.10">
    <property type="match status" value="1"/>
</dbReference>
<dbReference type="Gene3D" id="3.90.1150.10">
    <property type="entry name" value="Aspartate Aminotransferase, domain 1"/>
    <property type="match status" value="1"/>
</dbReference>
<dbReference type="Gene3D" id="3.40.640.10">
    <property type="entry name" value="Type I PLP-dependent aspartate aminotransferase-like (Major domain)"/>
    <property type="match status" value="1"/>
</dbReference>
<dbReference type="HAMAP" id="MF_00713">
    <property type="entry name" value="GcvPB"/>
    <property type="match status" value="1"/>
</dbReference>
<dbReference type="InterPro" id="IPR000192">
    <property type="entry name" value="Aminotrans_V_dom"/>
</dbReference>
<dbReference type="InterPro" id="IPR023012">
    <property type="entry name" value="GcvPB"/>
</dbReference>
<dbReference type="InterPro" id="IPR049316">
    <property type="entry name" value="GDC-P_C"/>
</dbReference>
<dbReference type="InterPro" id="IPR020581">
    <property type="entry name" value="GDC_P"/>
</dbReference>
<dbReference type="InterPro" id="IPR015424">
    <property type="entry name" value="PyrdxlP-dep_Trfase"/>
</dbReference>
<dbReference type="InterPro" id="IPR015421">
    <property type="entry name" value="PyrdxlP-dep_Trfase_major"/>
</dbReference>
<dbReference type="InterPro" id="IPR015422">
    <property type="entry name" value="PyrdxlP-dep_Trfase_small"/>
</dbReference>
<dbReference type="NCBIfam" id="NF003346">
    <property type="entry name" value="PRK04366.1"/>
    <property type="match status" value="1"/>
</dbReference>
<dbReference type="PANTHER" id="PTHR11773:SF1">
    <property type="entry name" value="GLYCINE DEHYDROGENASE (DECARBOXYLATING), MITOCHONDRIAL"/>
    <property type="match status" value="1"/>
</dbReference>
<dbReference type="PANTHER" id="PTHR11773">
    <property type="entry name" value="GLYCINE DEHYDROGENASE, DECARBOXYLATING"/>
    <property type="match status" value="1"/>
</dbReference>
<dbReference type="Pfam" id="PF00266">
    <property type="entry name" value="Aminotran_5"/>
    <property type="match status" value="1"/>
</dbReference>
<dbReference type="Pfam" id="PF21478">
    <property type="entry name" value="GcvP2_C"/>
    <property type="match status" value="1"/>
</dbReference>
<dbReference type="SUPFAM" id="SSF53383">
    <property type="entry name" value="PLP-dependent transferases"/>
    <property type="match status" value="1"/>
</dbReference>
<protein>
    <recommendedName>
        <fullName evidence="1">Probable glycine dehydrogenase (decarboxylating) subunit 2</fullName>
        <ecNumber evidence="1">1.4.4.2</ecNumber>
    </recommendedName>
    <alternativeName>
        <fullName evidence="1">Glycine cleavage system P-protein subunit 2</fullName>
    </alternativeName>
    <alternativeName>
        <fullName evidence="1">Glycine decarboxylase subunit 2</fullName>
    </alternativeName>
    <alternativeName>
        <fullName evidence="1">Glycine dehydrogenase (aminomethyl-transferring) subunit 2</fullName>
    </alternativeName>
</protein>
<reference key="1">
    <citation type="submission" date="2008-06" db="EMBL/GenBank/DDBJ databases">
        <title>Complete sequence of Pelodictyon phaeoclathratiforme BU-1.</title>
        <authorList>
            <consortium name="US DOE Joint Genome Institute"/>
            <person name="Lucas S."/>
            <person name="Copeland A."/>
            <person name="Lapidus A."/>
            <person name="Glavina del Rio T."/>
            <person name="Dalin E."/>
            <person name="Tice H."/>
            <person name="Bruce D."/>
            <person name="Goodwin L."/>
            <person name="Pitluck S."/>
            <person name="Schmutz J."/>
            <person name="Larimer F."/>
            <person name="Land M."/>
            <person name="Hauser L."/>
            <person name="Kyrpides N."/>
            <person name="Mikhailova N."/>
            <person name="Liu Z."/>
            <person name="Li T."/>
            <person name="Zhao F."/>
            <person name="Overmann J."/>
            <person name="Bryant D.A."/>
            <person name="Richardson P."/>
        </authorList>
    </citation>
    <scope>NUCLEOTIDE SEQUENCE [LARGE SCALE GENOMIC DNA]</scope>
    <source>
        <strain>DSM 5477 / BU-1</strain>
    </source>
</reference>
<gene>
    <name evidence="1" type="primary">gcvPB</name>
    <name type="ordered locus">Ppha_0179</name>
</gene>
<name>GCSPB_PELPB</name>
<accession>B4SB96</accession>
<evidence type="ECO:0000255" key="1">
    <source>
        <dbReference type="HAMAP-Rule" id="MF_00713"/>
    </source>
</evidence>
<keyword id="KW-0560">Oxidoreductase</keyword>
<keyword id="KW-0663">Pyridoxal phosphate</keyword>
<keyword id="KW-1185">Reference proteome</keyword>
<organism>
    <name type="scientific">Pelodictyon phaeoclathratiforme (strain DSM 5477 / BU-1)</name>
    <dbReference type="NCBI Taxonomy" id="324925"/>
    <lineage>
        <taxon>Bacteria</taxon>
        <taxon>Pseudomonadati</taxon>
        <taxon>Chlorobiota</taxon>
        <taxon>Chlorobiia</taxon>
        <taxon>Chlorobiales</taxon>
        <taxon>Chlorobiaceae</taxon>
        <taxon>Chlorobium/Pelodictyon group</taxon>
        <taxon>Pelodictyon</taxon>
    </lineage>
</organism>
<sequence>MREKLIFELSRKGRKGYSLSGNELPEQPLENIIPSKYLRTTPAELPEVAESEVVRHFVRLSNLNYHVDKNMYPLGSCTMKYNPKINDYTCDLPGFSALHPLQPGETTQGALQLMFELAEMLREIAGMAAVTLQPAAGAHGELTGILLIKKYHESIGSKRHKLLVVDSAHGTNPASAALAGYDIISVKGNADGRTDLDDLRSKLDGDVAALMLTNPNTIGLFETEILAISKMVHDNGSLLYMDGANMNALLGITRPGDMGFDVVHYNLHKTFAAPHGGGGPGSGPVGVSEKLIPFLLVPVIVKEGTTYKLSYDRPESIGRMMNFYGNFAVLVRAYTYIRMLGPDGLRRVSENAIINANYLLSLLLESYDLPYPKPVMHEFCLSGDRQKKAHGVKTLDIAKRLLDYGFHAPTIYFPLIVSEALMIEPTETESKETLDVFAQALLSIADEAANNPALVTSAPVTTPVKRLDDAMASRQLNICCSL</sequence>
<feature type="chain" id="PRO_1000132503" description="Probable glycine dehydrogenase (decarboxylating) subunit 2">
    <location>
        <begin position="1"/>
        <end position="482"/>
    </location>
</feature>
<feature type="modified residue" description="N6-(pyridoxal phosphate)lysine" evidence="1">
    <location>
        <position position="269"/>
    </location>
</feature>
<comment type="function">
    <text evidence="1">The glycine cleavage system catalyzes the degradation of glycine. The P protein binds the alpha-amino group of glycine through its pyridoxal phosphate cofactor; CO(2) is released and the remaining methylamine moiety is then transferred to the lipoamide cofactor of the H protein.</text>
</comment>
<comment type="catalytic activity">
    <reaction evidence="1">
        <text>N(6)-[(R)-lipoyl]-L-lysyl-[glycine-cleavage complex H protein] + glycine + H(+) = N(6)-[(R)-S(8)-aminomethyldihydrolipoyl]-L-lysyl-[glycine-cleavage complex H protein] + CO2</text>
        <dbReference type="Rhea" id="RHEA:24304"/>
        <dbReference type="Rhea" id="RHEA-COMP:10494"/>
        <dbReference type="Rhea" id="RHEA-COMP:10495"/>
        <dbReference type="ChEBI" id="CHEBI:15378"/>
        <dbReference type="ChEBI" id="CHEBI:16526"/>
        <dbReference type="ChEBI" id="CHEBI:57305"/>
        <dbReference type="ChEBI" id="CHEBI:83099"/>
        <dbReference type="ChEBI" id="CHEBI:83143"/>
        <dbReference type="EC" id="1.4.4.2"/>
    </reaction>
</comment>
<comment type="cofactor">
    <cofactor evidence="1">
        <name>pyridoxal 5'-phosphate</name>
        <dbReference type="ChEBI" id="CHEBI:597326"/>
    </cofactor>
</comment>
<comment type="subunit">
    <text evidence="1">The glycine cleavage system is composed of four proteins: P, T, L and H. In this organism, the P 'protein' is a heterodimer of two subunits.</text>
</comment>
<comment type="similarity">
    <text evidence="1">Belongs to the GcvP family. C-terminal subunit subfamily.</text>
</comment>
<proteinExistence type="inferred from homology"/>